<sequence>MSAAPVQDKDTLSNAERAKNVNGLLQVLMDINTLNGGSSDTADKIRIHAKNFEAALFAKSSSKKEYMDSMNEKVAVMRNTYNTRKNAVTAAAANNNIKPVEQHHINNLKNSGNSANNMNVNMNLNPQMFLNQQAQARQQVAQQLRNQQQQQQQQQQQQRRQLTPQQQQLVNQMKVAPIPKQLLQRIPNIPPNINTWQQVTALAQQKLLTPQDMEAAKEVYKIHQQLLFKARLQQQQAQAQAQANNNNNGLPQNGNINNNINIPQQQQMQPPNSSANNNPLQQQSSQNTVPNVLNQINQIFSPEEQRSLLQEAIETCKNFEKTQLGSTMTEPVKQSFIRKYINQKALRKIQALRDVKNNNNANNNGSNLQRAQNVPMNIIQQQQQQNTNNNDTIATSATPNAAAFSQQQNASSKLYQMQQQQQAQAQAQAQAQAQAQAQAQAQAAQAAQAQAQAQAQAQAQAQAQAQAQAQAQAQAQAQAQAHAQHQPSQQPQQAQQQPNPLHGLTPTAKDVEVIKQLSLDASKTNLRLTDVTNSLSNEEKEKIKMKLKQGQKLFVQVSNFAPQVYIITKNENFLKEVFQLRIFVKEILEKCAEGIFVVKLDTVDRLIIKYQKYWESMRIQILRRQAILRQQQQMANNNGNPGTTSTGNNNNIATQQNMQQSLQQMQHLQQLKMQQQQQQQQQQQQQQQQQQQQQQQHIYPSSTPGVANYSAMANAPGNNIPYMNHKNTSSMDFLNSMENTPKVPVSAAATPSLNKTINGKVNGRTKSNTIPVTSIPSTNKKLSISNAASQQPTPRSASNTAKSTPNTNPSPLKTQTKNGTPNPNNMKTVQSPMGAQPSYNSAIIENAFRKEELLLKDLEIRKLEISSRFKHRQEIFKDSPMDLFMSTLGDCLGIKDEEMLTSCTIPKAVVDHINGSGKRKPTKAAQRARDQDSIDISIKDNKLVMKSKFNKSNRSYSIALSNVAAIFKGIGGNFKDLSTLVHSSSPSTSSNMDVGNPRKRKASVLEISPQDSIASVLSPDSNIMSDSKKIKVDSPDDPFMTKSGATTSEKQEVTNEAPFLTSGTSSEQFNVWDWNNWTSAT</sequence>
<gene>
    <name evidence="12 14" type="primary">GAL11</name>
    <name evidence="14" type="synonym">ABE1</name>
    <name evidence="11" type="synonym">MED15</name>
    <name evidence="14" type="synonym">RAR3</name>
    <name evidence="14" type="synonym">SDS4</name>
    <name evidence="14" type="synonym">SPT13</name>
    <name type="ordered locus">YOL051W</name>
</gene>
<comment type="function">
    <text evidence="5 6 7">Component of the Mediator complex, a coactivator involved in the regulated transcription of nearly all RNA polymerase II-dependent genes. Mediator functions as a bridge to convey information from gene-specific regulatory proteins to the basal RNA polymerase II transcription machinery. The Mediator complex, having a compact conformation in its free form, is recruited to promoters by direct interactions with regulatory proteins and serves for the assembly of a functional pre-initiation complex with RNA polymerase II and the general transcription factors. The Mediator complex unfolds to an extended conformation and partially surrounds RNA polymerase II, specifically interacting with the unphosphorylated form of the C-terminal domain (CTD) of RNA polymerase II. The Mediator complex dissociates from the RNA polymerase II holoenzyme and stays at the promoter when transcriptional elongation begins. It has an important role in the negative regulation of Ty transcription.</text>
</comment>
<comment type="subunit">
    <text evidence="2 9 10">Component of the Mediator complex, which is composed of at least 21 subunits that form three structurally distinct submodules (PubMed:17192271). The Mediator head module contains MED6, MED8, MED11, SRB4/MED17, SRB5/MED18, ROX3/MED19, SRB2/MED20 and SRB6/MED22, the middle module contains MED1, MED4, NUT1/MED5, MED7, CSE2/MED9, NUT2/MED10, SRB7/MED21 and SOH1/MED31, and the tail module contains MED2, PGD1/MED3, RGR1/MED14, GAL11/MED15 and SIN4/MED16 (PubMed:17192271). The head and the middle modules interact directly with RNA polymerase II, whereas the elongated tail module interacts with gene-specific regulatory proteins (PubMed:17192271). GAL11/MED15 interacts with the activator GAL4; the interaction is direct (PubMed:11478912). GAL11/MED15 interacts (via multiple regions) with the activator GCN4; the interaction is direct (PubMed:19940160).</text>
</comment>
<comment type="interaction">
    <interactant intactId="EBI-7305">
        <id>P19659</id>
    </interactant>
    <interactant intactId="EBI-13019">
        <id>P12383</id>
        <label>PDR1</label>
    </interactant>
    <organismsDiffer>false</organismsDiffer>
    <experiments>5</experiments>
</comment>
<comment type="interaction">
    <interactant intactId="EBI-7305">
        <id>P19659</id>
    </interactant>
    <interactant intactId="EBI-948328">
        <id>P36956-1</id>
        <label>SREBF1</label>
    </interactant>
    <organismsDiffer>true</organismsDiffer>
    <experiments>3</experiments>
</comment>
<comment type="subcellular location">
    <subcellularLocation>
        <location evidence="3 8">Nucleus</location>
    </subcellularLocation>
</comment>
<comment type="disruption phenotype">
    <text evidence="10">Sensitive to amino acid starvation (PubMed:19940160). Normal GCN4 protein level during amino acid starvation (PubMed:19940160).</text>
</comment>
<comment type="miscellaneous">
    <text evidence="4">Present with 606 molecules/cell in log phase SD medium.</text>
</comment>
<comment type="similarity">
    <text evidence="13">Belongs to the Mediator complex subunit 15 family.</text>
</comment>
<accession>P19659</accession>
<accession>D6W217</accession>
<accession>Q08221</accession>
<evidence type="ECO:0000256" key="1">
    <source>
        <dbReference type="SAM" id="MobiDB-lite"/>
    </source>
</evidence>
<evidence type="ECO:0000269" key="2">
    <source>
    </source>
</evidence>
<evidence type="ECO:0000269" key="3">
    <source>
    </source>
</evidence>
<evidence type="ECO:0000269" key="4">
    <source>
    </source>
</evidence>
<evidence type="ECO:0000269" key="5">
    <source>
    </source>
</evidence>
<evidence type="ECO:0000269" key="6">
    <source>
    </source>
</evidence>
<evidence type="ECO:0000269" key="7">
    <source>
    </source>
</evidence>
<evidence type="ECO:0000269" key="8">
    <source>
    </source>
</evidence>
<evidence type="ECO:0000269" key="9">
    <source>
    </source>
</evidence>
<evidence type="ECO:0000269" key="10">
    <source>
    </source>
</evidence>
<evidence type="ECO:0000303" key="11">
    <source>
    </source>
</evidence>
<evidence type="ECO:0000303" key="12">
    <source>
    </source>
</evidence>
<evidence type="ECO:0000305" key="13"/>
<evidence type="ECO:0000312" key="14">
    <source>
        <dbReference type="SGD" id="S000005411"/>
    </source>
</evidence>
<evidence type="ECO:0007744" key="15">
    <source>
    </source>
</evidence>
<evidence type="ECO:0007744" key="16">
    <source>
    </source>
</evidence>
<evidence type="ECO:0007744" key="17">
    <source>
    </source>
</evidence>
<evidence type="ECO:0007744" key="18">
    <source>
    </source>
</evidence>
<evidence type="ECO:0007744" key="19">
    <source>
    </source>
</evidence>
<evidence type="ECO:0007744" key="20">
    <source>
    </source>
</evidence>
<evidence type="ECO:0007829" key="21">
    <source>
        <dbReference type="PDB" id="2K0N"/>
    </source>
</evidence>
<evidence type="ECO:0007829" key="22">
    <source>
        <dbReference type="PDB" id="2LPB"/>
    </source>
</evidence>
<evidence type="ECO:0007829" key="23">
    <source>
        <dbReference type="PDB" id="6ALY"/>
    </source>
</evidence>
<protein>
    <recommendedName>
        <fullName>Mediator of RNA polymerase II transcription subunit 15</fullName>
    </recommendedName>
    <alternativeName>
        <fullName>Autonomous replication regulatory protein 3</fullName>
    </alternativeName>
    <alternativeName>
        <fullName>Basal expression activator protein 1</fullName>
    </alternativeName>
    <alternativeName>
        <fullName>Defective silencing suppressor protein 4</fullName>
    </alternativeName>
    <alternativeName>
        <fullName>Mediator complex subunit 15</fullName>
    </alternativeName>
    <alternativeName>
        <fullName>Transcription regulatory protein GAL11</fullName>
    </alternativeName>
    <alternativeName>
        <fullName>Ty insertion suppressor protein 13</fullName>
    </alternativeName>
</protein>
<dbReference type="EMBL" id="M22481">
    <property type="protein sequence ID" value="AAA34622.1"/>
    <property type="molecule type" value="Genomic_DNA"/>
</dbReference>
<dbReference type="EMBL" id="Z74793">
    <property type="protein sequence ID" value="CAA99056.1"/>
    <property type="molecule type" value="Genomic_DNA"/>
</dbReference>
<dbReference type="EMBL" id="X91067">
    <property type="protein sequence ID" value="CAA62537.1"/>
    <property type="molecule type" value="Genomic_DNA"/>
</dbReference>
<dbReference type="EMBL" id="BK006948">
    <property type="protein sequence ID" value="DAA10733.1"/>
    <property type="molecule type" value="Genomic_DNA"/>
</dbReference>
<dbReference type="PIR" id="S66736">
    <property type="entry name" value="S66736"/>
</dbReference>
<dbReference type="RefSeq" id="NP_014591.1">
    <property type="nucleotide sequence ID" value="NM_001183305.1"/>
</dbReference>
<dbReference type="PDB" id="2K0N">
    <property type="method" value="NMR"/>
    <property type="chains" value="A=6-90"/>
</dbReference>
<dbReference type="PDB" id="2LPB">
    <property type="method" value="NMR"/>
    <property type="chains" value="A=158-238"/>
</dbReference>
<dbReference type="PDB" id="6ALY">
    <property type="method" value="NMR"/>
    <property type="chains" value="A=277-368"/>
</dbReference>
<dbReference type="PDB" id="7UIC">
    <property type="method" value="EM"/>
    <property type="resolution" value="3.70 A"/>
    <property type="chains" value="o=1-1081"/>
</dbReference>
<dbReference type="PDB" id="7UIK">
    <property type="method" value="EM"/>
    <property type="resolution" value="7.70 A"/>
    <property type="chains" value="o=1-1081"/>
</dbReference>
<dbReference type="PDB" id="7UIL">
    <property type="method" value="EM"/>
    <property type="resolution" value="4.30 A"/>
    <property type="chains" value="5/o=1-1081"/>
</dbReference>
<dbReference type="PDB" id="7UIO">
    <property type="method" value="EM"/>
    <property type="resolution" value="3.30 A"/>
    <property type="chains" value="Ao/Bo=1-1081"/>
</dbReference>
<dbReference type="PDBsum" id="2K0N"/>
<dbReference type="PDBsum" id="2LPB"/>
<dbReference type="PDBsum" id="6ALY"/>
<dbReference type="PDBsum" id="7UIC"/>
<dbReference type="PDBsum" id="7UIK"/>
<dbReference type="PDBsum" id="7UIL"/>
<dbReference type="PDBsum" id="7UIO"/>
<dbReference type="BMRB" id="P19659"/>
<dbReference type="EMDB" id="EMD-26543"/>
<dbReference type="EMDB" id="EMD-26547"/>
<dbReference type="EMDB" id="EMD-26548"/>
<dbReference type="EMDB" id="EMD-26551"/>
<dbReference type="SMR" id="P19659"/>
<dbReference type="BioGRID" id="34353">
    <property type="interactions" value="205"/>
</dbReference>
<dbReference type="ComplexPortal" id="CPX-3226">
    <property type="entry name" value="Core mediator complex"/>
</dbReference>
<dbReference type="DIP" id="DIP-2334N"/>
<dbReference type="FunCoup" id="P19659">
    <property type="interactions" value="320"/>
</dbReference>
<dbReference type="IntAct" id="P19659">
    <property type="interactions" value="40"/>
</dbReference>
<dbReference type="MINT" id="P19659"/>
<dbReference type="STRING" id="4932.YOL051W"/>
<dbReference type="GlyGen" id="P19659">
    <property type="glycosylation" value="5 sites, 1 O-linked glycan (3 sites)"/>
</dbReference>
<dbReference type="iPTMnet" id="P19659"/>
<dbReference type="PaxDb" id="4932-YOL051W"/>
<dbReference type="PeptideAtlas" id="P19659"/>
<dbReference type="EnsemblFungi" id="YOL051W_mRNA">
    <property type="protein sequence ID" value="YOL051W"/>
    <property type="gene ID" value="YOL051W"/>
</dbReference>
<dbReference type="GeneID" id="854106"/>
<dbReference type="KEGG" id="sce:YOL051W"/>
<dbReference type="AGR" id="SGD:S000005411"/>
<dbReference type="SGD" id="S000005411">
    <property type="gene designation" value="GAL11"/>
</dbReference>
<dbReference type="VEuPathDB" id="FungiDB:YOL051W"/>
<dbReference type="eggNOG" id="ENOG502QVXD">
    <property type="taxonomic scope" value="Eukaryota"/>
</dbReference>
<dbReference type="HOGENOM" id="CLU_009962_0_0_1"/>
<dbReference type="InParanoid" id="P19659"/>
<dbReference type="OMA" id="RYQKYYE"/>
<dbReference type="OrthoDB" id="1938591at2759"/>
<dbReference type="BioCyc" id="YEAST:G3O-33462-MONOMER"/>
<dbReference type="BioGRID-ORCS" id="854106">
    <property type="hits" value="5 hits in 10 CRISPR screens"/>
</dbReference>
<dbReference type="CD-CODE" id="279CD642">
    <property type="entry name" value="Synthetic Condensate 000197"/>
</dbReference>
<dbReference type="CD-CODE" id="BE14A044">
    <property type="entry name" value="Transcriptional condensate"/>
</dbReference>
<dbReference type="CD-CODE" id="E95823B6">
    <property type="entry name" value="Synthetic Condensate 000194"/>
</dbReference>
<dbReference type="EvolutionaryTrace" id="P19659"/>
<dbReference type="PRO" id="PR:P19659"/>
<dbReference type="Proteomes" id="UP000002311">
    <property type="component" value="Chromosome XV"/>
</dbReference>
<dbReference type="RNAct" id="P19659">
    <property type="molecule type" value="protein"/>
</dbReference>
<dbReference type="GO" id="GO:0070847">
    <property type="term" value="C:core mediator complex"/>
    <property type="evidence" value="ECO:0000314"/>
    <property type="project" value="SGD"/>
</dbReference>
<dbReference type="GO" id="GO:0016592">
    <property type="term" value="C:mediator complex"/>
    <property type="evidence" value="ECO:0007669"/>
    <property type="project" value="InterPro"/>
</dbReference>
<dbReference type="GO" id="GO:0005634">
    <property type="term" value="C:nucleus"/>
    <property type="evidence" value="ECO:0000314"/>
    <property type="project" value="ComplexPortal"/>
</dbReference>
<dbReference type="GO" id="GO:0061629">
    <property type="term" value="F:RNA polymerase II-specific DNA-binding transcription factor binding"/>
    <property type="evidence" value="ECO:0000314"/>
    <property type="project" value="SGD"/>
</dbReference>
<dbReference type="GO" id="GO:0001095">
    <property type="term" value="F:TFIIE-class transcription factor complex binding"/>
    <property type="evidence" value="ECO:0000314"/>
    <property type="project" value="SGD"/>
</dbReference>
<dbReference type="GO" id="GO:0001097">
    <property type="term" value="F:TFIIH-class transcription factor complex binding"/>
    <property type="evidence" value="ECO:0000314"/>
    <property type="project" value="SGD"/>
</dbReference>
<dbReference type="GO" id="GO:0003713">
    <property type="term" value="F:transcription coactivator activity"/>
    <property type="evidence" value="ECO:0000314"/>
    <property type="project" value="SGD"/>
</dbReference>
<dbReference type="GO" id="GO:0034605">
    <property type="term" value="P:cellular response to heat"/>
    <property type="evidence" value="ECO:0000315"/>
    <property type="project" value="SGD"/>
</dbReference>
<dbReference type="GO" id="GO:0000122">
    <property type="term" value="P:negative regulation of transcription by RNA polymerase II"/>
    <property type="evidence" value="ECO:0000315"/>
    <property type="project" value="SGD"/>
</dbReference>
<dbReference type="GO" id="GO:2000219">
    <property type="term" value="P:positive regulation of invasive growth in response to glucose limitation"/>
    <property type="evidence" value="ECO:0000315"/>
    <property type="project" value="SGD"/>
</dbReference>
<dbReference type="GO" id="GO:0045944">
    <property type="term" value="P:positive regulation of transcription by RNA polymerase II"/>
    <property type="evidence" value="ECO:0000314"/>
    <property type="project" value="SGD"/>
</dbReference>
<dbReference type="GO" id="GO:0032968">
    <property type="term" value="P:positive regulation of transcription elongation by RNA polymerase II"/>
    <property type="evidence" value="ECO:0000314"/>
    <property type="project" value="ComplexPortal"/>
</dbReference>
<dbReference type="GO" id="GO:0060261">
    <property type="term" value="P:positive regulation of transcription initiation by RNA polymerase II"/>
    <property type="evidence" value="ECO:0000314"/>
    <property type="project" value="ComplexPortal"/>
</dbReference>
<dbReference type="GO" id="GO:0070202">
    <property type="term" value="P:regulation of establishment of protein localization to chromosome"/>
    <property type="evidence" value="ECO:0000315"/>
    <property type="project" value="SGD"/>
</dbReference>
<dbReference type="GO" id="GO:0051123">
    <property type="term" value="P:RNA polymerase II preinitiation complex assembly"/>
    <property type="evidence" value="ECO:0000314"/>
    <property type="project" value="SGD"/>
</dbReference>
<dbReference type="CDD" id="cd12191">
    <property type="entry name" value="gal11_coact"/>
    <property type="match status" value="1"/>
</dbReference>
<dbReference type="FunFam" id="1.10.246.20:FF:000007">
    <property type="entry name" value="RNA polymerase II holoenzyme complex component"/>
    <property type="match status" value="1"/>
</dbReference>
<dbReference type="FunFam" id="1.10.287.2920:FF:000001">
    <property type="entry name" value="RNA polymerase II holoenzyme complex component"/>
    <property type="match status" value="1"/>
</dbReference>
<dbReference type="Gene3D" id="1.10.287.2920">
    <property type="match status" value="1"/>
</dbReference>
<dbReference type="Gene3D" id="1.10.246.20">
    <property type="entry name" value="Coactivator CBP, KIX domain"/>
    <property type="match status" value="1"/>
</dbReference>
<dbReference type="InterPro" id="IPR033789">
    <property type="entry name" value="Gal11_coact"/>
</dbReference>
<dbReference type="InterPro" id="IPR036529">
    <property type="entry name" value="KIX_dom_sf"/>
</dbReference>
<dbReference type="InterPro" id="IPR036546">
    <property type="entry name" value="MED15_KIX"/>
</dbReference>
<dbReference type="InterPro" id="IPR008626">
    <property type="entry name" value="Mediator_Med15_fun"/>
</dbReference>
<dbReference type="PANTHER" id="PTHR48125">
    <property type="entry name" value="LP07818P1"/>
    <property type="match status" value="1"/>
</dbReference>
<dbReference type="PANTHER" id="PTHR48125:SF10">
    <property type="entry name" value="OS12G0136300 PROTEIN"/>
    <property type="match status" value="1"/>
</dbReference>
<dbReference type="Pfam" id="PF18535">
    <property type="entry name" value="Gal11_ABD1"/>
    <property type="match status" value="1"/>
</dbReference>
<dbReference type="Pfam" id="PF16987">
    <property type="entry name" value="KIX_2"/>
    <property type="match status" value="1"/>
</dbReference>
<dbReference type="Pfam" id="PF05397">
    <property type="entry name" value="Med15_fungi"/>
    <property type="match status" value="1"/>
</dbReference>
<reference key="1">
    <citation type="journal article" date="1988" name="Mol. Cell. Biol.">
        <title>GAL11 protein, an auxiliary transcription activator for genes encoding galactose-metabolizing enzymes in Saccharomyces cerevisiae.</title>
        <authorList>
            <person name="Suzuki Y."/>
            <person name="Nogi Y."/>
            <person name="Abe A."/>
            <person name="Fukasawa T."/>
        </authorList>
    </citation>
    <scope>NUCLEOTIDE SEQUENCE [GENOMIC DNA]</scope>
    <source>
        <strain>ATCC 204508 / S288c</strain>
    </source>
</reference>
<reference key="2">
    <citation type="journal article" date="1992" name="Mol. Cell. Biol.">
        <authorList>
            <person name="Suzuki Y."/>
            <person name="Nogi Y."/>
            <person name="Abe A."/>
            <person name="Fukasawa T."/>
        </authorList>
    </citation>
    <scope>ERRATUM OF PUBMED:3062377</scope>
    <scope>SEQUENCE REVISION</scope>
</reference>
<reference key="3">
    <citation type="journal article" date="1997" name="Nature">
        <title>The nucleotide sequence of Saccharomyces cerevisiae chromosome XV.</title>
        <authorList>
            <person name="Dujon B."/>
            <person name="Albermann K."/>
            <person name="Aldea M."/>
            <person name="Alexandraki D."/>
            <person name="Ansorge W."/>
            <person name="Arino J."/>
            <person name="Benes V."/>
            <person name="Bohn C."/>
            <person name="Bolotin-Fukuhara M."/>
            <person name="Bordonne R."/>
            <person name="Boyer J."/>
            <person name="Camasses A."/>
            <person name="Casamayor A."/>
            <person name="Casas C."/>
            <person name="Cheret G."/>
            <person name="Cziepluch C."/>
            <person name="Daignan-Fornier B."/>
            <person name="Dang V.-D."/>
            <person name="de Haan M."/>
            <person name="Delius H."/>
            <person name="Durand P."/>
            <person name="Fairhead C."/>
            <person name="Feldmann H."/>
            <person name="Gaillon L."/>
            <person name="Galisson F."/>
            <person name="Gamo F.-J."/>
            <person name="Gancedo C."/>
            <person name="Goffeau A."/>
            <person name="Goulding S.E."/>
            <person name="Grivell L.A."/>
            <person name="Habbig B."/>
            <person name="Hand N.J."/>
            <person name="Hani J."/>
            <person name="Hattenhorst U."/>
            <person name="Hebling U."/>
            <person name="Hernando Y."/>
            <person name="Herrero E."/>
            <person name="Heumann K."/>
            <person name="Hiesel R."/>
            <person name="Hilger F."/>
            <person name="Hofmann B."/>
            <person name="Hollenberg C.P."/>
            <person name="Hughes B."/>
            <person name="Jauniaux J.-C."/>
            <person name="Kalogeropoulos A."/>
            <person name="Katsoulou C."/>
            <person name="Kordes E."/>
            <person name="Lafuente M.J."/>
            <person name="Landt O."/>
            <person name="Louis E.J."/>
            <person name="Maarse A.C."/>
            <person name="Madania A."/>
            <person name="Mannhaupt G."/>
            <person name="Marck C."/>
            <person name="Martin R.P."/>
            <person name="Mewes H.-W."/>
            <person name="Michaux G."/>
            <person name="Paces V."/>
            <person name="Parle-McDermott A.G."/>
            <person name="Pearson B.M."/>
            <person name="Perrin A."/>
            <person name="Pettersson B."/>
            <person name="Poch O."/>
            <person name="Pohl T.M."/>
            <person name="Poirey R."/>
            <person name="Portetelle D."/>
            <person name="Pujol A."/>
            <person name="Purnelle B."/>
            <person name="Ramezani Rad M."/>
            <person name="Rechmann S."/>
            <person name="Schwager C."/>
            <person name="Schweizer M."/>
            <person name="Sor F."/>
            <person name="Sterky F."/>
            <person name="Tarassov I.A."/>
            <person name="Teodoru C."/>
            <person name="Tettelin H."/>
            <person name="Thierry A."/>
            <person name="Tobiasch E."/>
            <person name="Tzermia M."/>
            <person name="Uhlen M."/>
            <person name="Unseld M."/>
            <person name="Valens M."/>
            <person name="Vandenbol M."/>
            <person name="Vetter I."/>
            <person name="Vlcek C."/>
            <person name="Voet M."/>
            <person name="Volckaert G."/>
            <person name="Voss H."/>
            <person name="Wambutt R."/>
            <person name="Wedler H."/>
            <person name="Wiemann S."/>
            <person name="Winsor B."/>
            <person name="Wolfe K.H."/>
            <person name="Zollner A."/>
            <person name="Zumstein E."/>
            <person name="Kleine K."/>
        </authorList>
    </citation>
    <scope>NUCLEOTIDE SEQUENCE [LARGE SCALE GENOMIC DNA]</scope>
    <source>
        <strain>ATCC 204508 / S288c</strain>
    </source>
</reference>
<reference key="4">
    <citation type="journal article" date="2014" name="G3 (Bethesda)">
        <title>The reference genome sequence of Saccharomyces cerevisiae: Then and now.</title>
        <authorList>
            <person name="Engel S.R."/>
            <person name="Dietrich F.S."/>
            <person name="Fisk D.G."/>
            <person name="Binkley G."/>
            <person name="Balakrishnan R."/>
            <person name="Costanzo M.C."/>
            <person name="Dwight S.S."/>
            <person name="Hitz B.C."/>
            <person name="Karra K."/>
            <person name="Nash R.S."/>
            <person name="Weng S."/>
            <person name="Wong E.D."/>
            <person name="Lloyd P."/>
            <person name="Skrzypek M.S."/>
            <person name="Miyasato S.R."/>
            <person name="Simison M."/>
            <person name="Cherry J.M."/>
        </authorList>
    </citation>
    <scope>GENOME REANNOTATION</scope>
    <source>
        <strain>ATCC 204508 / S288c</strain>
    </source>
</reference>
<reference key="5">
    <citation type="journal article" date="1996" name="Yeast">
        <title>Analysis of a 26 kb region on the left arm of yeast chromosome XV.</title>
        <authorList>
            <person name="Mannhaupt G."/>
            <person name="Vetter I."/>
            <person name="Schwarzlose C."/>
            <person name="Mitzel S."/>
            <person name="Feldmann H."/>
        </authorList>
    </citation>
    <scope>NUCLEOTIDE SEQUENCE [GENOMIC DNA] OF 1-352</scope>
    <source>
        <strain>ATCC 90843 / S288c / FY73</strain>
    </source>
</reference>
<reference key="6">
    <citation type="journal article" date="1991" name="Mol. Cell. Biol.">
        <title>GAL11 (SPT13), a transcriptional regulator of diverse yeast genes, affects the phosphorylation state of GAL4, a highly specific transcriptional activator.</title>
        <authorList>
            <person name="Long R.M."/>
            <person name="Mylin L.M."/>
            <person name="Hopper J.E."/>
        </authorList>
    </citation>
    <scope>CHARACTERIZATION</scope>
</reference>
<reference key="7">
    <citation type="journal article" date="1994" name="Cell">
        <title>A multiprotein mediator of transcriptional activation and its interaction with the C-terminal repeat domain of RNA polymerase II.</title>
        <authorList>
            <person name="Kim Y.-J."/>
            <person name="Bjoerklund S."/>
            <person name="Li Y."/>
            <person name="Sayre M.H."/>
            <person name="Kornberg R.D."/>
        </authorList>
    </citation>
    <scope>COMPONENT OF MEDIATOR COMPLEX</scope>
</reference>
<reference key="8">
    <citation type="journal article" date="2001" name="Biochemistry">
        <title>Evidence that Gal11 protein is a target of the Gal4 activation domain in the mediator.</title>
        <authorList>
            <person name="Jeong C.-J."/>
            <person name="Yang S.-H."/>
            <person name="Xie Y."/>
            <person name="Zhang L."/>
            <person name="Johnston S.A."/>
            <person name="Kodadek T."/>
        </authorList>
    </citation>
    <scope>INTERACTION WITH GAL4</scope>
</reference>
<reference key="9">
    <citation type="journal article" date="2003" name="Nature">
        <title>Global analysis of protein localization in budding yeast.</title>
        <authorList>
            <person name="Huh W.-K."/>
            <person name="Falvo J.V."/>
            <person name="Gerke L.C."/>
            <person name="Carroll A.S."/>
            <person name="Howson R.W."/>
            <person name="Weissman J.S."/>
            <person name="O'Shea E.K."/>
        </authorList>
    </citation>
    <scope>SUBCELLULAR LOCATION [LARGE SCALE ANALYSIS]</scope>
</reference>
<reference key="10">
    <citation type="journal article" date="2003" name="Nature">
        <title>Global analysis of protein expression in yeast.</title>
        <authorList>
            <person name="Ghaemmaghami S."/>
            <person name="Huh W.-K."/>
            <person name="Bower K."/>
            <person name="Howson R.W."/>
            <person name="Belle A."/>
            <person name="Dephoure N."/>
            <person name="O'Shea E.K."/>
            <person name="Weissman J.S."/>
        </authorList>
    </citation>
    <scope>LEVEL OF PROTEIN EXPRESSION [LARGE SCALE ANALYSIS]</scope>
</reference>
<reference key="11">
    <citation type="journal article" date="2004" name="Mol. Cell">
        <title>A unified nomenclature for protein subunits of mediator complexes linking transcriptional regulators to RNA polymerase II.</title>
        <authorList>
            <person name="Bourbon H.-M."/>
            <person name="Aguilera A."/>
            <person name="Ansari A.Z."/>
            <person name="Asturias F.J."/>
            <person name="Berk A.J."/>
            <person name="Bjoerklund S."/>
            <person name="Blackwell T.K."/>
            <person name="Borggrefe T."/>
            <person name="Carey M."/>
            <person name="Carlson M."/>
            <person name="Conaway J.W."/>
            <person name="Conaway R.C."/>
            <person name="Emmons S.W."/>
            <person name="Fondell J.D."/>
            <person name="Freedman L.P."/>
            <person name="Fukasawa T."/>
            <person name="Gustafsson C.M."/>
            <person name="Han M."/>
            <person name="He X."/>
            <person name="Herman P.K."/>
            <person name="Hinnebusch A.G."/>
            <person name="Holmberg S."/>
            <person name="Holstege F.C.P."/>
            <person name="Jaehning J.A."/>
            <person name="Kim Y.-J."/>
            <person name="Kuras L."/>
            <person name="Leutz A."/>
            <person name="Lis J.T."/>
            <person name="Meisterernest M."/>
            <person name="Naeaer A.M."/>
            <person name="Nasmyth K."/>
            <person name="Parvin J.D."/>
            <person name="Ptashne M."/>
            <person name="Reinberg D."/>
            <person name="Ronne H."/>
            <person name="Sadowski I."/>
            <person name="Sakurai H."/>
            <person name="Sipiczki M."/>
            <person name="Sternberg P.W."/>
            <person name="Stillman D.J."/>
            <person name="Strich R."/>
            <person name="Struhl K."/>
            <person name="Svejstrup J.Q."/>
            <person name="Tuck S."/>
            <person name="Winston F."/>
            <person name="Roeder R.G."/>
            <person name="Kornberg R.D."/>
        </authorList>
    </citation>
    <scope>NOMENCLATURE</scope>
</reference>
<reference key="12">
    <citation type="journal article" date="2004" name="Nucleic Acids Res.">
        <title>A high resolution protein interaction map of the yeast Mediator complex.</title>
        <authorList>
            <person name="Guglielmi B."/>
            <person name="van Berkum N.L."/>
            <person name="Klapholz B."/>
            <person name="Bijma T."/>
            <person name="Boube M."/>
            <person name="Boschiero C."/>
            <person name="Bourbon H.-M."/>
            <person name="Holstege F.C.P."/>
            <person name="Werner M."/>
        </authorList>
    </citation>
    <scope>TOPOLOGY OF THE MEDIATOR COMPLEX</scope>
</reference>
<reference key="13">
    <citation type="journal article" date="2005" name="J. Biol. Chem.">
        <title>Mediator and TFIIH govern carboxyl-terminal domain-dependent transcription in yeast extracts.</title>
        <authorList>
            <person name="Nair D."/>
            <person name="Kim Y."/>
            <person name="Myers L.C."/>
        </authorList>
    </citation>
    <scope>FUNCTION OF THE MEDIATOR COMPLEX</scope>
</reference>
<reference key="14">
    <citation type="journal article" date="2005" name="Mol. Cell">
        <title>Mediator expression profiling epistasis reveals a signal transduction pathway with antagonistic submodules and highly specific downstream targets.</title>
        <authorList>
            <person name="van de Peppel J."/>
            <person name="Kettelarij N."/>
            <person name="van Bakel H."/>
            <person name="Kockelkorn T.T.J.P."/>
            <person name="van Leenen D."/>
            <person name="Holstege F.C.P."/>
        </authorList>
    </citation>
    <scope>FUNCTION</scope>
</reference>
<reference key="15">
    <citation type="journal article" date="2005" name="Mol. Cell. Proteomics">
        <title>Quantitative phosphoproteomics applied to the yeast pheromone signaling pathway.</title>
        <authorList>
            <person name="Gruhler A."/>
            <person name="Olsen J.V."/>
            <person name="Mohammed S."/>
            <person name="Mortensen P."/>
            <person name="Faergeman N.J."/>
            <person name="Mann M."/>
            <person name="Jensen O.N."/>
        </authorList>
    </citation>
    <scope>PHOSPHORYLATION [LARGE SCALE ANALYSIS] AT SER-783</scope>
    <scope>IDENTIFICATION BY MASS SPECTROMETRY [LARGE SCALE ANALYSIS]</scope>
    <source>
        <strain>YAL6B</strain>
    </source>
</reference>
<reference key="16">
    <citation type="journal article" date="2006" name="J. Biol. Chem.">
        <title>Mediator as a general transcription factor.</title>
        <authorList>
            <person name="Takagi Y."/>
            <person name="Kornberg R.D."/>
        </authorList>
    </citation>
    <scope>FUNCTION OF THE MEDIATOR COMPLEX</scope>
</reference>
<reference key="17">
    <citation type="journal article" date="2006" name="Mol. Cell">
        <title>Genome-wide location of the coactivator mediator: binding without activation and transient Cdk8 interaction on DNA.</title>
        <authorList>
            <person name="Andrau J.-C."/>
            <person name="van de Pasch L."/>
            <person name="Lijnzaad P."/>
            <person name="Bijma T."/>
            <person name="Koerkamp M.G."/>
            <person name="van de Peppel J."/>
            <person name="Werner M."/>
            <person name="Holstege F.C.P."/>
        </authorList>
    </citation>
    <scope>SUBCELLULAR LOCATION</scope>
</reference>
<reference key="18">
    <citation type="journal article" date="2006" name="Nat. Struct. Mol. Biol.">
        <title>Activator-specific recruitment of Mediator in vivo.</title>
        <authorList>
            <person name="Fan X."/>
            <person name="Chou D.M."/>
            <person name="Struhl K."/>
        </authorList>
    </citation>
    <scope>ASSOCIATION WITH PROMOTER REGIONS</scope>
</reference>
<reference key="19">
    <citation type="journal article" date="2007" name="J. Biol. Chem.">
        <title>Med19(Rox3) regulates intermodule interactions in the Saccharomyces cerevisiae mediator complex.</title>
        <authorList>
            <person name="Baidoobonso S.M."/>
            <person name="Guidi B.W."/>
            <person name="Myers L.C."/>
        </authorList>
    </citation>
    <scope>CHARACTERIZATION OF THE MEDIATOR COMPLEX</scope>
    <scope>INTERACTION OF THE MEDIATOR COMPLEX WITH RNA POLYMERASE II</scope>
</reference>
<reference key="20">
    <citation type="journal article" date="2007" name="J. Proteome Res.">
        <title>Large-scale phosphorylation analysis of alpha-factor-arrested Saccharomyces cerevisiae.</title>
        <authorList>
            <person name="Li X."/>
            <person name="Gerber S.A."/>
            <person name="Rudner A.D."/>
            <person name="Beausoleil S.A."/>
            <person name="Haas W."/>
            <person name="Villen J."/>
            <person name="Elias J.E."/>
            <person name="Gygi S.P."/>
        </authorList>
    </citation>
    <scope>PHOSPHORYLATION [LARGE SCALE ANALYSIS] AT SER-1034</scope>
    <scope>IDENTIFICATION BY MASS SPECTROMETRY [LARGE SCALE ANALYSIS]</scope>
    <source>
        <strain>ADR376</strain>
    </source>
</reference>
<reference key="21">
    <citation type="journal article" date="2007" name="Proc. Natl. Acad. Sci. U.S.A.">
        <title>Analysis of phosphorylation sites on proteins from Saccharomyces cerevisiae by electron transfer dissociation (ETD) mass spectrometry.</title>
        <authorList>
            <person name="Chi A."/>
            <person name="Huttenhower C."/>
            <person name="Geer L.Y."/>
            <person name="Coon J.J."/>
            <person name="Syka J.E.P."/>
            <person name="Bai D.L."/>
            <person name="Shabanowitz J."/>
            <person name="Burke D.J."/>
            <person name="Troyanskaya O.G."/>
            <person name="Hunt D.F."/>
        </authorList>
    </citation>
    <scope>PHOSPHORYLATION [LARGE SCALE ANALYSIS] AT SER-1034</scope>
    <scope>IDENTIFICATION BY MASS SPECTROMETRY [LARGE SCALE ANALYSIS]</scope>
</reference>
<reference key="22">
    <citation type="journal article" date="2008" name="Mol. Cell. Proteomics">
        <title>A multidimensional chromatography technology for in-depth phosphoproteome analysis.</title>
        <authorList>
            <person name="Albuquerque C.P."/>
            <person name="Smolka M.B."/>
            <person name="Payne S.H."/>
            <person name="Bafna V."/>
            <person name="Eng J."/>
            <person name="Zhou H."/>
        </authorList>
    </citation>
    <scope>PHOSPHORYLATION [LARGE SCALE ANALYSIS] AT SER-335; SER-736; SER-752; THR-793; SER-1003; SER-1018 AND SER-1034</scope>
    <scope>IDENTIFICATION BY MASS SPECTROMETRY [LARGE SCALE ANALYSIS]</scope>
</reference>
<reference key="23">
    <citation type="journal article" date="2009" name="Science">
        <title>Global analysis of Cdk1 substrate phosphorylation sites provides insights into evolution.</title>
        <authorList>
            <person name="Holt L.J."/>
            <person name="Tuch B.B."/>
            <person name="Villen J."/>
            <person name="Johnson A.D."/>
            <person name="Gygi S.P."/>
            <person name="Morgan D.O."/>
        </authorList>
    </citation>
    <scope>PHOSPHORYLATION [LARGE SCALE ANALYSIS] AT SER-783; SER-785; SER-789; THR-793; SER-831; SER-1003; SER-1008; SER-1018 AND SER-1034</scope>
    <scope>IDENTIFICATION BY MASS SPECTROMETRY [LARGE SCALE ANALYSIS]</scope>
</reference>
<reference key="24">
    <citation type="journal article" date="2010" name="J. Biol. Chem.">
        <title>Activator Gcn4 employs multiple segments of Med15/Gal11, including the KIX domain, to recruit mediator to target genes in vivo.</title>
        <authorList>
            <person name="Jedidi I."/>
            <person name="Zhang F."/>
            <person name="Qiu H."/>
            <person name="Stahl S.J."/>
            <person name="Palmer I."/>
            <person name="Kaufman J.D."/>
            <person name="Nadaud P.S."/>
            <person name="Mukherjee S."/>
            <person name="Wingfield P.T."/>
            <person name="Jaroniec C.P."/>
            <person name="Hinnebusch A.G."/>
        </authorList>
    </citation>
    <scope>INTERACTION WITH GCN4</scope>
    <scope>DISRUPTION PHENOTYPE</scope>
    <scope>MUTAGENESIS OF 29-MET--ASP-43; 29-MET--SER-39 AND 196-TRP--VAL-199</scope>
</reference>
<reference key="25">
    <citation type="journal article" date="2012" name="Proc. Natl. Acad. Sci. U.S.A.">
        <title>N-terminal acetylome analyses and functional insights of the N-terminal acetyltransferase NatB.</title>
        <authorList>
            <person name="Van Damme P."/>
            <person name="Lasa M."/>
            <person name="Polevoda B."/>
            <person name="Gazquez C."/>
            <person name="Elosegui-Artola A."/>
            <person name="Kim D.S."/>
            <person name="De Juan-Pardo E."/>
            <person name="Demeyer K."/>
            <person name="Hole K."/>
            <person name="Larrea E."/>
            <person name="Timmerman E."/>
            <person name="Prieto J."/>
            <person name="Arnesen T."/>
            <person name="Sherman F."/>
            <person name="Gevaert K."/>
            <person name="Aldabe R."/>
        </authorList>
    </citation>
    <scope>ACETYLATION [LARGE SCALE ANALYSIS] AT SER-2</scope>
    <scope>CLEAVAGE OF INITIATOR METHIONINE [LARGE SCALE ANALYSIS]</scope>
    <scope>IDENTIFICATION BY MASS SPECTROMETRY [LARGE SCALE ANALYSIS]</scope>
</reference>
<reference key="26">
    <citation type="journal article" date="2002" name="Mol. Cell">
        <title>Structure of the yeast RNA polymerase II holoenzyme: mediator conformation and polymerase interaction.</title>
        <authorList>
            <person name="Davis J.A."/>
            <person name="Takagi Y."/>
            <person name="Kornberg R.D."/>
            <person name="Asturias F.J."/>
        </authorList>
    </citation>
    <scope>ELECTRON MICROSCOPY OF MEDIATOR COMPLEX IN COMPLEX WITH RNA POLYMERASE II</scope>
</reference>
<proteinExistence type="evidence at protein level"/>
<organism>
    <name type="scientific">Saccharomyces cerevisiae (strain ATCC 204508 / S288c)</name>
    <name type="common">Baker's yeast</name>
    <dbReference type="NCBI Taxonomy" id="559292"/>
    <lineage>
        <taxon>Eukaryota</taxon>
        <taxon>Fungi</taxon>
        <taxon>Dikarya</taxon>
        <taxon>Ascomycota</taxon>
        <taxon>Saccharomycotina</taxon>
        <taxon>Saccharomycetes</taxon>
        <taxon>Saccharomycetales</taxon>
        <taxon>Saccharomycetaceae</taxon>
        <taxon>Saccharomyces</taxon>
    </lineage>
</organism>
<keyword id="KW-0002">3D-structure</keyword>
<keyword id="KW-0007">Acetylation</keyword>
<keyword id="KW-0010">Activator</keyword>
<keyword id="KW-0539">Nucleus</keyword>
<keyword id="KW-0597">Phosphoprotein</keyword>
<keyword id="KW-1185">Reference proteome</keyword>
<keyword id="KW-0677">Repeat</keyword>
<keyword id="KW-0804">Transcription</keyword>
<keyword id="KW-0805">Transcription regulation</keyword>
<feature type="initiator methionine" description="Removed" evidence="20">
    <location>
        <position position="1"/>
    </location>
</feature>
<feature type="chain" id="PRO_0000096363" description="Mediator of RNA polymerase II transcription subunit 15">
    <location>
        <begin position="2"/>
        <end position="1081"/>
    </location>
</feature>
<feature type="repeat" description="1">
    <location>
        <begin position="422"/>
        <end position="423"/>
    </location>
</feature>
<feature type="repeat" description="2">
    <location>
        <begin position="424"/>
        <end position="425"/>
    </location>
</feature>
<feature type="repeat" description="3">
    <location>
        <begin position="426"/>
        <end position="427"/>
    </location>
</feature>
<feature type="repeat" description="4">
    <location>
        <begin position="428"/>
        <end position="429"/>
    </location>
</feature>
<feature type="repeat" description="5">
    <location>
        <begin position="430"/>
        <end position="431"/>
    </location>
</feature>
<feature type="repeat" description="6">
    <location>
        <begin position="432"/>
        <end position="433"/>
    </location>
</feature>
<feature type="repeat" description="7">
    <location>
        <begin position="434"/>
        <end position="435"/>
    </location>
</feature>
<feature type="repeat" description="8">
    <location>
        <begin position="436"/>
        <end position="437"/>
    </location>
</feature>
<feature type="repeat" description="9">
    <location>
        <begin position="438"/>
        <end position="439"/>
    </location>
</feature>
<feature type="repeat" description="10">
    <location>
        <begin position="440"/>
        <end position="441"/>
    </location>
</feature>
<feature type="repeat" description="11">
    <location>
        <begin position="442"/>
        <end position="443"/>
    </location>
</feature>
<feature type="repeat" description="12; approximate">
    <location>
        <begin position="444"/>
        <end position="445"/>
    </location>
</feature>
<feature type="repeat" description="13; approximate">
    <location>
        <begin position="446"/>
        <end position="447"/>
    </location>
</feature>
<feature type="repeat" description="14">
    <location>
        <begin position="448"/>
        <end position="449"/>
    </location>
</feature>
<feature type="repeat" description="15">
    <location>
        <begin position="450"/>
        <end position="451"/>
    </location>
</feature>
<feature type="repeat" description="16">
    <location>
        <begin position="452"/>
        <end position="453"/>
    </location>
</feature>
<feature type="repeat" description="17">
    <location>
        <begin position="454"/>
        <end position="455"/>
    </location>
</feature>
<feature type="repeat" description="18">
    <location>
        <begin position="456"/>
        <end position="457"/>
    </location>
</feature>
<feature type="repeat" description="19">
    <location>
        <begin position="458"/>
        <end position="459"/>
    </location>
</feature>
<feature type="repeat" description="20">
    <location>
        <begin position="460"/>
        <end position="461"/>
    </location>
</feature>
<feature type="repeat" description="21">
    <location>
        <begin position="462"/>
        <end position="463"/>
    </location>
</feature>
<feature type="repeat" description="22">
    <location>
        <begin position="464"/>
        <end position="465"/>
    </location>
</feature>
<feature type="repeat" description="23">
    <location>
        <begin position="466"/>
        <end position="467"/>
    </location>
</feature>
<feature type="repeat" description="24">
    <location>
        <begin position="468"/>
        <end position="469"/>
    </location>
</feature>
<feature type="repeat" description="25">
    <location>
        <begin position="470"/>
        <end position="471"/>
    </location>
</feature>
<feature type="repeat" description="26">
    <location>
        <begin position="472"/>
        <end position="473"/>
    </location>
</feature>
<feature type="repeat" description="27">
    <location>
        <begin position="474"/>
        <end position="475"/>
    </location>
</feature>
<feature type="repeat" description="28">
    <location>
        <begin position="476"/>
        <end position="477"/>
    </location>
</feature>
<feature type="repeat" description="29">
    <location>
        <begin position="478"/>
        <end position="479"/>
    </location>
</feature>
<feature type="repeat" description="30">
    <location>
        <begin position="480"/>
        <end position="481"/>
    </location>
</feature>
<feature type="region of interest" description="Interaction with GCN4" evidence="10">
    <location>
        <begin position="25"/>
        <end position="49"/>
    </location>
</feature>
<feature type="region of interest" description="Disordered" evidence="1">
    <location>
        <begin position="238"/>
        <end position="286"/>
    </location>
</feature>
<feature type="region of interest" description="30 X 2 AA approximate tandem repeats of Q-A">
    <location>
        <begin position="422"/>
        <end position="481"/>
    </location>
</feature>
<feature type="region of interest" description="Disordered" evidence="1">
    <location>
        <begin position="476"/>
        <end position="505"/>
    </location>
</feature>
<feature type="region of interest" description="Disordered" evidence="1">
    <location>
        <begin position="692"/>
        <end position="712"/>
    </location>
</feature>
<feature type="region of interest" description="Disordered" evidence="1">
    <location>
        <begin position="744"/>
        <end position="836"/>
    </location>
</feature>
<feature type="region of interest" description="Disordered" evidence="1">
    <location>
        <begin position="1026"/>
        <end position="1055"/>
    </location>
</feature>
<feature type="compositionally biased region" description="Low complexity" evidence="1">
    <location>
        <begin position="476"/>
        <end position="497"/>
    </location>
</feature>
<feature type="compositionally biased region" description="Polar residues" evidence="1">
    <location>
        <begin position="749"/>
        <end position="836"/>
    </location>
</feature>
<feature type="modified residue" description="N-acetylserine" evidence="20">
    <location>
        <position position="2"/>
    </location>
</feature>
<feature type="modified residue" description="Phosphoserine" evidence="18">
    <location>
        <position position="335"/>
    </location>
</feature>
<feature type="modified residue" description="Phosphoserine" evidence="18">
    <location>
        <position position="736"/>
    </location>
</feature>
<feature type="modified residue" description="Phosphoserine" evidence="18">
    <location>
        <position position="752"/>
    </location>
</feature>
<feature type="modified residue" description="Phosphoserine" evidence="15 19">
    <location>
        <position position="783"/>
    </location>
</feature>
<feature type="modified residue" description="Phosphoserine" evidence="19">
    <location>
        <position position="785"/>
    </location>
</feature>
<feature type="modified residue" description="Phosphoserine" evidence="19">
    <location>
        <position position="789"/>
    </location>
</feature>
<feature type="modified residue" description="Phosphothreonine" evidence="18 19">
    <location>
        <position position="793"/>
    </location>
</feature>
<feature type="modified residue" description="Phosphoserine" evidence="19">
    <location>
        <position position="831"/>
    </location>
</feature>
<feature type="modified residue" description="Phosphoserine" evidence="18 19">
    <location>
        <position position="1003"/>
    </location>
</feature>
<feature type="modified residue" description="Phosphoserine" evidence="19">
    <location>
        <position position="1008"/>
    </location>
</feature>
<feature type="modified residue" description="Phosphoserine" evidence="18 19">
    <location>
        <position position="1018"/>
    </location>
</feature>
<feature type="modified residue" description="Phosphoserine" evidence="16 17 18 19">
    <location>
        <position position="1034"/>
    </location>
</feature>
<feature type="mutagenesis site" description="Decreases the interaction between the mediator complex and GCN4. Decreases transcription of GCN4-dependent targets. Sensitive to amino acid starvation." evidence="10">
    <original>MDINTLNGGSSDTAD</original>
    <variation>ADIATANGGAADAAA</variation>
    <location>
        <begin position="29"/>
        <end position="43"/>
    </location>
</feature>
<feature type="mutagenesis site" description="Decreases the interaction between the mediator complex and GCN4. Decreases transcription of GCN4-dependent targets. Sensitive to amino acid starvation." evidence="10">
    <original>MDINTLNGGSS</original>
    <variation>ADIATLNGGAA</variation>
    <location>
        <begin position="29"/>
        <end position="39"/>
    </location>
</feature>
<feature type="mutagenesis site" description="Decreases transcription of GCN4-dependent targets. Decreases recruitment of the mediator complex to the upstream activating sequence (UAS) of amino-acid starvation responsive genes. Sensitive to amino acid starvation." evidence="10">
    <original>WQQV</original>
    <variation>AQAA</variation>
    <location>
        <begin position="196"/>
        <end position="199"/>
    </location>
</feature>
<feature type="sequence conflict" description="In Ref. 1; AAA34622." evidence="13" ref="1">
    <original>N</original>
    <variation>T</variation>
    <location>
        <position position="171"/>
    </location>
</feature>
<feature type="sequence conflict" description="In Ref. 1; AAA34622." evidence="13" ref="1">
    <original>P</original>
    <variation>Q</variation>
    <location>
        <position position="302"/>
    </location>
</feature>
<feature type="sequence conflict" description="In Ref. 1; AAA34622." evidence="13" ref="1">
    <original>N</original>
    <variation>T</variation>
    <location>
        <position position="499"/>
    </location>
</feature>
<feature type="sequence conflict" description="In Ref. 1; AAA34622." evidence="13" ref="1">
    <original>P</original>
    <variation>Q</variation>
    <location>
        <position position="751"/>
    </location>
</feature>
<feature type="strand" evidence="21">
    <location>
        <begin position="8"/>
        <end position="11"/>
    </location>
</feature>
<feature type="helix" evidence="21">
    <location>
        <begin position="14"/>
        <end position="35"/>
    </location>
</feature>
<feature type="helix" evidence="21">
    <location>
        <begin position="41"/>
        <end position="58"/>
    </location>
</feature>
<feature type="helix" evidence="21">
    <location>
        <begin position="63"/>
        <end position="89"/>
    </location>
</feature>
<feature type="helix" evidence="22">
    <location>
        <begin position="164"/>
        <end position="170"/>
    </location>
</feature>
<feature type="helix" evidence="22">
    <location>
        <begin position="172"/>
        <end position="174"/>
    </location>
</feature>
<feature type="helix" evidence="22">
    <location>
        <begin position="180"/>
        <end position="183"/>
    </location>
</feature>
<feature type="helix" evidence="22">
    <location>
        <begin position="196"/>
        <end position="199"/>
    </location>
</feature>
<feature type="helix" evidence="22">
    <location>
        <begin position="201"/>
        <end position="204"/>
    </location>
</feature>
<feature type="helix" evidence="22">
    <location>
        <begin position="210"/>
        <end position="232"/>
    </location>
</feature>
<feature type="helix" evidence="23">
    <location>
        <begin position="296"/>
        <end position="299"/>
    </location>
</feature>
<feature type="helix" evidence="23">
    <location>
        <begin position="302"/>
        <end position="322"/>
    </location>
</feature>
<feature type="helix" evidence="23">
    <location>
        <begin position="330"/>
        <end position="353"/>
    </location>
</feature>
<name>MED15_YEAST</name>